<reference key="1">
    <citation type="journal article" date="2005" name="Science">
        <title>The transcriptional landscape of the mammalian genome.</title>
        <authorList>
            <person name="Carninci P."/>
            <person name="Kasukawa T."/>
            <person name="Katayama S."/>
            <person name="Gough J."/>
            <person name="Frith M.C."/>
            <person name="Maeda N."/>
            <person name="Oyama R."/>
            <person name="Ravasi T."/>
            <person name="Lenhard B."/>
            <person name="Wells C."/>
            <person name="Kodzius R."/>
            <person name="Shimokawa K."/>
            <person name="Bajic V.B."/>
            <person name="Brenner S.E."/>
            <person name="Batalov S."/>
            <person name="Forrest A.R."/>
            <person name="Zavolan M."/>
            <person name="Davis M.J."/>
            <person name="Wilming L.G."/>
            <person name="Aidinis V."/>
            <person name="Allen J.E."/>
            <person name="Ambesi-Impiombato A."/>
            <person name="Apweiler R."/>
            <person name="Aturaliya R.N."/>
            <person name="Bailey T.L."/>
            <person name="Bansal M."/>
            <person name="Baxter L."/>
            <person name="Beisel K.W."/>
            <person name="Bersano T."/>
            <person name="Bono H."/>
            <person name="Chalk A.M."/>
            <person name="Chiu K.P."/>
            <person name="Choudhary V."/>
            <person name="Christoffels A."/>
            <person name="Clutterbuck D.R."/>
            <person name="Crowe M.L."/>
            <person name="Dalla E."/>
            <person name="Dalrymple B.P."/>
            <person name="de Bono B."/>
            <person name="Della Gatta G."/>
            <person name="di Bernardo D."/>
            <person name="Down T."/>
            <person name="Engstrom P."/>
            <person name="Fagiolini M."/>
            <person name="Faulkner G."/>
            <person name="Fletcher C.F."/>
            <person name="Fukushima T."/>
            <person name="Furuno M."/>
            <person name="Futaki S."/>
            <person name="Gariboldi M."/>
            <person name="Georgii-Hemming P."/>
            <person name="Gingeras T.R."/>
            <person name="Gojobori T."/>
            <person name="Green R.E."/>
            <person name="Gustincich S."/>
            <person name="Harbers M."/>
            <person name="Hayashi Y."/>
            <person name="Hensch T.K."/>
            <person name="Hirokawa N."/>
            <person name="Hill D."/>
            <person name="Huminiecki L."/>
            <person name="Iacono M."/>
            <person name="Ikeo K."/>
            <person name="Iwama A."/>
            <person name="Ishikawa T."/>
            <person name="Jakt M."/>
            <person name="Kanapin A."/>
            <person name="Katoh M."/>
            <person name="Kawasawa Y."/>
            <person name="Kelso J."/>
            <person name="Kitamura H."/>
            <person name="Kitano H."/>
            <person name="Kollias G."/>
            <person name="Krishnan S.P."/>
            <person name="Kruger A."/>
            <person name="Kummerfeld S.K."/>
            <person name="Kurochkin I.V."/>
            <person name="Lareau L.F."/>
            <person name="Lazarevic D."/>
            <person name="Lipovich L."/>
            <person name="Liu J."/>
            <person name="Liuni S."/>
            <person name="McWilliam S."/>
            <person name="Madan Babu M."/>
            <person name="Madera M."/>
            <person name="Marchionni L."/>
            <person name="Matsuda H."/>
            <person name="Matsuzawa S."/>
            <person name="Miki H."/>
            <person name="Mignone F."/>
            <person name="Miyake S."/>
            <person name="Morris K."/>
            <person name="Mottagui-Tabar S."/>
            <person name="Mulder N."/>
            <person name="Nakano N."/>
            <person name="Nakauchi H."/>
            <person name="Ng P."/>
            <person name="Nilsson R."/>
            <person name="Nishiguchi S."/>
            <person name="Nishikawa S."/>
            <person name="Nori F."/>
            <person name="Ohara O."/>
            <person name="Okazaki Y."/>
            <person name="Orlando V."/>
            <person name="Pang K.C."/>
            <person name="Pavan W.J."/>
            <person name="Pavesi G."/>
            <person name="Pesole G."/>
            <person name="Petrovsky N."/>
            <person name="Piazza S."/>
            <person name="Reed J."/>
            <person name="Reid J.F."/>
            <person name="Ring B.Z."/>
            <person name="Ringwald M."/>
            <person name="Rost B."/>
            <person name="Ruan Y."/>
            <person name="Salzberg S.L."/>
            <person name="Sandelin A."/>
            <person name="Schneider C."/>
            <person name="Schoenbach C."/>
            <person name="Sekiguchi K."/>
            <person name="Semple C.A."/>
            <person name="Seno S."/>
            <person name="Sessa L."/>
            <person name="Sheng Y."/>
            <person name="Shibata Y."/>
            <person name="Shimada H."/>
            <person name="Shimada K."/>
            <person name="Silva D."/>
            <person name="Sinclair B."/>
            <person name="Sperling S."/>
            <person name="Stupka E."/>
            <person name="Sugiura K."/>
            <person name="Sultana R."/>
            <person name="Takenaka Y."/>
            <person name="Taki K."/>
            <person name="Tammoja K."/>
            <person name="Tan S.L."/>
            <person name="Tang S."/>
            <person name="Taylor M.S."/>
            <person name="Tegner J."/>
            <person name="Teichmann S.A."/>
            <person name="Ueda H.R."/>
            <person name="van Nimwegen E."/>
            <person name="Verardo R."/>
            <person name="Wei C.L."/>
            <person name="Yagi K."/>
            <person name="Yamanishi H."/>
            <person name="Zabarovsky E."/>
            <person name="Zhu S."/>
            <person name="Zimmer A."/>
            <person name="Hide W."/>
            <person name="Bult C."/>
            <person name="Grimmond S.M."/>
            <person name="Teasdale R.D."/>
            <person name="Liu E.T."/>
            <person name="Brusic V."/>
            <person name="Quackenbush J."/>
            <person name="Wahlestedt C."/>
            <person name="Mattick J.S."/>
            <person name="Hume D.A."/>
            <person name="Kai C."/>
            <person name="Sasaki D."/>
            <person name="Tomaru Y."/>
            <person name="Fukuda S."/>
            <person name="Kanamori-Katayama M."/>
            <person name="Suzuki M."/>
            <person name="Aoki J."/>
            <person name="Arakawa T."/>
            <person name="Iida J."/>
            <person name="Imamura K."/>
            <person name="Itoh M."/>
            <person name="Kato T."/>
            <person name="Kawaji H."/>
            <person name="Kawagashira N."/>
            <person name="Kawashima T."/>
            <person name="Kojima M."/>
            <person name="Kondo S."/>
            <person name="Konno H."/>
            <person name="Nakano K."/>
            <person name="Ninomiya N."/>
            <person name="Nishio T."/>
            <person name="Okada M."/>
            <person name="Plessy C."/>
            <person name="Shibata K."/>
            <person name="Shiraki T."/>
            <person name="Suzuki S."/>
            <person name="Tagami M."/>
            <person name="Waki K."/>
            <person name="Watahiki A."/>
            <person name="Okamura-Oho Y."/>
            <person name="Suzuki H."/>
            <person name="Kawai J."/>
            <person name="Hayashizaki Y."/>
        </authorList>
    </citation>
    <scope>NUCLEOTIDE SEQUENCE [LARGE SCALE MRNA]</scope>
    <source>
        <strain>C57BL/6J</strain>
        <tissue>Retina</tissue>
        <tissue>Spinal cord</tissue>
        <tissue>Testis</tissue>
        <tissue>Tongue</tissue>
    </source>
</reference>
<reference key="2">
    <citation type="journal article" date="2004" name="Genome Res.">
        <title>The status, quality, and expansion of the NIH full-length cDNA project: the Mammalian Gene Collection (MGC).</title>
        <authorList>
            <consortium name="The MGC Project Team"/>
        </authorList>
    </citation>
    <scope>NUCLEOTIDE SEQUENCE [LARGE SCALE MRNA]</scope>
    <source>
        <strain>FVB/N</strain>
        <tissue>Mammary tumor</tissue>
    </source>
</reference>
<reference key="3">
    <citation type="journal article" date="2009" name="Immunity">
        <title>The phagosomal proteome in interferon-gamma-activated macrophages.</title>
        <authorList>
            <person name="Trost M."/>
            <person name="English L."/>
            <person name="Lemieux S."/>
            <person name="Courcelles M."/>
            <person name="Desjardins M."/>
            <person name="Thibault P."/>
        </authorList>
    </citation>
    <scope>PHOSPHORYLATION [LARGE SCALE ANALYSIS] AT TYR-10 AND SER-14</scope>
    <scope>IDENTIFICATION BY MASS SPECTROMETRY [LARGE SCALE ANALYSIS]</scope>
</reference>
<reference key="4">
    <citation type="journal article" date="2010" name="Cell">
        <title>A tissue-specific atlas of mouse protein phosphorylation and expression.</title>
        <authorList>
            <person name="Huttlin E.L."/>
            <person name="Jedrychowski M.P."/>
            <person name="Elias J.E."/>
            <person name="Goswami T."/>
            <person name="Rad R."/>
            <person name="Beausoleil S.A."/>
            <person name="Villen J."/>
            <person name="Haas W."/>
            <person name="Sowa M.E."/>
            <person name="Gygi S.P."/>
        </authorList>
    </citation>
    <scope>IDENTIFICATION BY MASS SPECTROMETRY [LARGE SCALE ANALYSIS]</scope>
    <source>
        <tissue>Kidney</tissue>
        <tissue>Lung</tissue>
        <tissue>Testis</tissue>
    </source>
</reference>
<reference key="5">
    <citation type="journal article" date="2019" name="Science">
        <title>PAC, an evolutionarily conserved membrane protein, is a proton-activated chloride channel.</title>
        <authorList>
            <person name="Yang J."/>
            <person name="Chen J."/>
            <person name="Del Carmen Vitery M."/>
            <person name="Osei-Owusu J."/>
            <person name="Chu J."/>
            <person name="Yu H."/>
            <person name="Sun S."/>
            <person name="Qiu Z."/>
        </authorList>
    </citation>
    <scope>FUNCTION</scope>
    <scope>TRANSPORTER ACTIVITY</scope>
    <scope>DISRUPTION PHENOTYPE</scope>
</reference>
<feature type="chain" id="PRO_0000279472" description="Proton-activated chloride channel">
    <location>
        <begin position="1"/>
        <end position="350"/>
    </location>
</feature>
<feature type="topological domain" description="Cytoplasmic" evidence="2">
    <location>
        <begin position="1"/>
        <end position="64"/>
    </location>
</feature>
<feature type="transmembrane region" description="Helical" evidence="3">
    <location>
        <begin position="65"/>
        <end position="85"/>
    </location>
</feature>
<feature type="topological domain" description="Extracellular" evidence="3">
    <location>
        <begin position="86"/>
        <end position="301"/>
    </location>
</feature>
<feature type="transmembrane region" description="Helical" evidence="3">
    <location>
        <begin position="302"/>
        <end position="318"/>
    </location>
</feature>
<feature type="topological domain" description="Cytoplasmic" evidence="2">
    <location>
        <begin position="319"/>
        <end position="350"/>
    </location>
</feature>
<feature type="modified residue" description="Phosphoserine" evidence="2">
    <location>
        <position position="9"/>
    </location>
</feature>
<feature type="modified residue" description="Phosphotyrosine" evidence="8">
    <location>
        <position position="10"/>
    </location>
</feature>
<feature type="modified residue" description="Phosphoserine" evidence="8">
    <location>
        <position position="14"/>
    </location>
</feature>
<feature type="modified residue" description="Phosphoserine" evidence="1">
    <location>
        <position position="24"/>
    </location>
</feature>
<feature type="glycosylation site" description="N-linked (GlcNAc...) asparagine" evidence="3">
    <location>
        <position position="155"/>
    </location>
</feature>
<feature type="glycosylation site" description="N-linked (GlcNAc...) asparagine" evidence="3">
    <location>
        <position position="162"/>
    </location>
</feature>
<gene>
    <name evidence="2" type="primary">Pacc1</name>
    <name evidence="7" type="synonym">Tmem206</name>
</gene>
<comment type="function">
    <text evidence="4">Chloride channel gated by pH that facilitates the entry of chloride ions into cells upon exposure to extracellular acidic pH (PubMed:31023925). Involved in acidosis-induced cell death by mediating chloride influx and subsequent cell swelling (PubMed:31023925).</text>
</comment>
<comment type="catalytic activity">
    <reaction evidence="4">
        <text>chloride(in) = chloride(out)</text>
        <dbReference type="Rhea" id="RHEA:29823"/>
        <dbReference type="ChEBI" id="CHEBI:17996"/>
    </reaction>
</comment>
<comment type="subcellular location">
    <subcellularLocation>
        <location evidence="2">Cell membrane</location>
        <topology evidence="2">Multi-pass membrane protein</topology>
    </subcellularLocation>
</comment>
<comment type="disruption phenotype">
    <text evidence="4">Mice are viable and appear mostly normal (PubMed:31023925). Cortical neurons completely lack proton-activated chloride channel activity (PubMed:31023925). Neurons are partially but significantly protected from delayed cell death induced by 1-hour acid treatment (PubMed:31023925).</text>
</comment>
<comment type="similarity">
    <text evidence="6">Belongs to the proton-activated chloride channel family.</text>
</comment>
<proteinExistence type="evidence at protein level"/>
<accession>Q9D771</accession>
<sequence>MIRQELSTSYQELSEELEQVVENSEQADERDKELVQVQGPGVVPGVDNESASSSIRFSKACLKNVFSVLLILIYLLLMAVAVFLVYQTITDFREKLKHPVMSVSYKEVDRYDAPGIAFYPGQAQLLSCKHHYEVIPPLASPGQPGDRNCTTQRINYTHPFFNHTMQSALIVQGPQEVKKRELVFLQFRLNQSNEDFSAIDYLLFSSFREFMQSPDKAGFMQACESAYSSWKFSGGFRTWVKMSLVKTKEEDGREAVEFRQETSVVNYIDQRPAAERSAQLFFVVFEWKDPFIQKVQDIITANPWNTIALLCGAFLALFKAAEFAKLSVKWMIKIRKRYLKRRGQATNHIS</sequence>
<keyword id="KW-1003">Cell membrane</keyword>
<keyword id="KW-0868">Chloride</keyword>
<keyword id="KW-0869">Chloride channel</keyword>
<keyword id="KW-0325">Glycoprotein</keyword>
<keyword id="KW-0407">Ion channel</keyword>
<keyword id="KW-0406">Ion transport</keyword>
<keyword id="KW-0472">Membrane</keyword>
<keyword id="KW-0597">Phosphoprotein</keyword>
<keyword id="KW-1185">Reference proteome</keyword>
<keyword id="KW-0812">Transmembrane</keyword>
<keyword id="KW-1133">Transmembrane helix</keyword>
<keyword id="KW-0813">Transport</keyword>
<dbReference type="EMBL" id="AK009526">
    <property type="protein sequence ID" value="BAB26340.1"/>
    <property type="molecule type" value="mRNA"/>
</dbReference>
<dbReference type="EMBL" id="AK031270">
    <property type="protein sequence ID" value="BAC27330.1"/>
    <property type="molecule type" value="mRNA"/>
</dbReference>
<dbReference type="EMBL" id="AK044482">
    <property type="protein sequence ID" value="BAC31946.1"/>
    <property type="molecule type" value="mRNA"/>
</dbReference>
<dbReference type="EMBL" id="AK049641">
    <property type="protein sequence ID" value="BAC33853.1"/>
    <property type="molecule type" value="mRNA"/>
</dbReference>
<dbReference type="EMBL" id="BC027151">
    <property type="protein sequence ID" value="AAH27151.1"/>
    <property type="molecule type" value="mRNA"/>
</dbReference>
<dbReference type="CCDS" id="CCDS15619.1"/>
<dbReference type="RefSeq" id="NP_080140.1">
    <property type="nucleotide sequence ID" value="NM_025864.4"/>
</dbReference>
<dbReference type="SMR" id="Q9D771"/>
<dbReference type="FunCoup" id="Q9D771">
    <property type="interactions" value="1246"/>
</dbReference>
<dbReference type="STRING" id="10090.ENSMUSP00000027940"/>
<dbReference type="GlyCosmos" id="Q9D771">
    <property type="glycosylation" value="2 sites, No reported glycans"/>
</dbReference>
<dbReference type="GlyGen" id="Q9D771">
    <property type="glycosylation" value="4 sites, 4 N-linked glycans (4 sites)"/>
</dbReference>
<dbReference type="iPTMnet" id="Q9D771"/>
<dbReference type="PhosphoSitePlus" id="Q9D771"/>
<dbReference type="SwissPalm" id="Q9D771"/>
<dbReference type="jPOST" id="Q9D771"/>
<dbReference type="PaxDb" id="10090-ENSMUSP00000027940"/>
<dbReference type="ProteomicsDB" id="259221"/>
<dbReference type="Pumba" id="Q9D771"/>
<dbReference type="Antibodypedia" id="47113">
    <property type="antibodies" value="31 antibodies from 11 providers"/>
</dbReference>
<dbReference type="DNASU" id="66950"/>
<dbReference type="Ensembl" id="ENSMUST00000027940.6">
    <property type="protein sequence ID" value="ENSMUSP00000027940.6"/>
    <property type="gene ID" value="ENSMUSG00000026627.8"/>
</dbReference>
<dbReference type="GeneID" id="66950"/>
<dbReference type="KEGG" id="mmu:66950"/>
<dbReference type="UCSC" id="uc007ech.1">
    <property type="organism name" value="mouse"/>
</dbReference>
<dbReference type="AGR" id="MGI:1914200"/>
<dbReference type="CTD" id="55248"/>
<dbReference type="MGI" id="MGI:1914200">
    <property type="gene designation" value="Pacc1"/>
</dbReference>
<dbReference type="VEuPathDB" id="HostDB:ENSMUSG00000026627"/>
<dbReference type="eggNOG" id="ENOG502QS5H">
    <property type="taxonomic scope" value="Eukaryota"/>
</dbReference>
<dbReference type="GeneTree" id="ENSGT00390000017528"/>
<dbReference type="HOGENOM" id="CLU_068069_0_0_1"/>
<dbReference type="InParanoid" id="Q9D771"/>
<dbReference type="OMA" id="EFMRDCE"/>
<dbReference type="OrthoDB" id="10069062at2759"/>
<dbReference type="PhylomeDB" id="Q9D771"/>
<dbReference type="TreeFam" id="TF333307"/>
<dbReference type="BioGRID-ORCS" id="66950">
    <property type="hits" value="1 hit in 81 CRISPR screens"/>
</dbReference>
<dbReference type="ChiTaRS" id="Pacc1">
    <property type="organism name" value="mouse"/>
</dbReference>
<dbReference type="PRO" id="PR:Q9D771"/>
<dbReference type="Proteomes" id="UP000000589">
    <property type="component" value="Chromosome 1"/>
</dbReference>
<dbReference type="RNAct" id="Q9D771">
    <property type="molecule type" value="protein"/>
</dbReference>
<dbReference type="Bgee" id="ENSMUSG00000026627">
    <property type="expression patterns" value="Expressed in islet of Langerhans and 252 other cell types or tissues"/>
</dbReference>
<dbReference type="GO" id="GO:0034707">
    <property type="term" value="C:chloride channel complex"/>
    <property type="evidence" value="ECO:0007669"/>
    <property type="project" value="UniProtKB-KW"/>
</dbReference>
<dbReference type="GO" id="GO:0005886">
    <property type="term" value="C:plasma membrane"/>
    <property type="evidence" value="ECO:0000250"/>
    <property type="project" value="UniProtKB"/>
</dbReference>
<dbReference type="GO" id="GO:0061797">
    <property type="term" value="F:pH-gated chloride channel activity"/>
    <property type="evidence" value="ECO:0000315"/>
    <property type="project" value="UniProtKB"/>
</dbReference>
<dbReference type="GO" id="GO:0006821">
    <property type="term" value="P:chloride transport"/>
    <property type="evidence" value="ECO:0000315"/>
    <property type="project" value="UniProtKB"/>
</dbReference>
<dbReference type="InterPro" id="IPR029366">
    <property type="entry name" value="TMEM206"/>
</dbReference>
<dbReference type="PANTHER" id="PTHR16087:SF0">
    <property type="entry name" value="PROTON-ACTIVATED CHLORIDE CHANNEL"/>
    <property type="match status" value="1"/>
</dbReference>
<dbReference type="PANTHER" id="PTHR16087">
    <property type="entry name" value="TRANSMEMBRANE PROTEIN 206"/>
    <property type="match status" value="1"/>
</dbReference>
<dbReference type="Pfam" id="PF15122">
    <property type="entry name" value="TMEM206"/>
    <property type="match status" value="1"/>
</dbReference>
<organism>
    <name type="scientific">Mus musculus</name>
    <name type="common">Mouse</name>
    <dbReference type="NCBI Taxonomy" id="10090"/>
    <lineage>
        <taxon>Eukaryota</taxon>
        <taxon>Metazoa</taxon>
        <taxon>Chordata</taxon>
        <taxon>Craniata</taxon>
        <taxon>Vertebrata</taxon>
        <taxon>Euteleostomi</taxon>
        <taxon>Mammalia</taxon>
        <taxon>Eutheria</taxon>
        <taxon>Euarchontoglires</taxon>
        <taxon>Glires</taxon>
        <taxon>Rodentia</taxon>
        <taxon>Myomorpha</taxon>
        <taxon>Muroidea</taxon>
        <taxon>Muridae</taxon>
        <taxon>Murinae</taxon>
        <taxon>Mus</taxon>
        <taxon>Mus</taxon>
    </lineage>
</organism>
<protein>
    <recommendedName>
        <fullName evidence="5">Proton-activated chloride channel</fullName>
        <shortName evidence="5">PAC</shortName>
    </recommendedName>
    <alternativeName>
        <fullName evidence="6">Transmembrane protein 206</fullName>
    </alternativeName>
</protein>
<evidence type="ECO:0000250" key="1">
    <source>
        <dbReference type="UniProtKB" id="Q66H28"/>
    </source>
</evidence>
<evidence type="ECO:0000250" key="2">
    <source>
        <dbReference type="UniProtKB" id="Q9H813"/>
    </source>
</evidence>
<evidence type="ECO:0000255" key="3"/>
<evidence type="ECO:0000269" key="4">
    <source>
    </source>
</evidence>
<evidence type="ECO:0000303" key="5">
    <source>
    </source>
</evidence>
<evidence type="ECO:0000305" key="6"/>
<evidence type="ECO:0000312" key="7">
    <source>
        <dbReference type="MGI" id="MGI:1914200"/>
    </source>
</evidence>
<evidence type="ECO:0007744" key="8">
    <source>
    </source>
</evidence>
<name>PACC1_MOUSE</name>